<proteinExistence type="inferred from homology"/>
<name>RL24_COLP3</name>
<gene>
    <name evidence="1" type="primary">rplX</name>
    <name type="ordered locus">CPS_0612</name>
</gene>
<comment type="function">
    <text evidence="1">One of two assembly initiator proteins, it binds directly to the 5'-end of the 23S rRNA, where it nucleates assembly of the 50S subunit.</text>
</comment>
<comment type="function">
    <text evidence="1">One of the proteins that surrounds the polypeptide exit tunnel on the outside of the subunit.</text>
</comment>
<comment type="subunit">
    <text evidence="1">Part of the 50S ribosomal subunit.</text>
</comment>
<comment type="similarity">
    <text evidence="1">Belongs to the universal ribosomal protein uL24 family.</text>
</comment>
<organism>
    <name type="scientific">Colwellia psychrerythraea (strain 34H / ATCC BAA-681)</name>
    <name type="common">Vibrio psychroerythus</name>
    <dbReference type="NCBI Taxonomy" id="167879"/>
    <lineage>
        <taxon>Bacteria</taxon>
        <taxon>Pseudomonadati</taxon>
        <taxon>Pseudomonadota</taxon>
        <taxon>Gammaproteobacteria</taxon>
        <taxon>Alteromonadales</taxon>
        <taxon>Colwelliaceae</taxon>
        <taxon>Colwellia</taxon>
    </lineage>
</organism>
<keyword id="KW-0687">Ribonucleoprotein</keyword>
<keyword id="KW-0689">Ribosomal protein</keyword>
<keyword id="KW-0694">RNA-binding</keyword>
<keyword id="KW-0699">rRNA-binding</keyword>
<accession>Q489A2</accession>
<sequence>MASKIRRDDEVIILAGKDKGKTGKVTKVLVEDGKVFVEGINLIKKHTKPVPQLQQPGGIVEKEAPLQVSNVAIVNSATGKADRVGFRIEDGKKVRFFKSNNELI</sequence>
<feature type="chain" id="PRO_0000241587" description="Large ribosomal subunit protein uL24">
    <location>
        <begin position="1"/>
        <end position="104"/>
    </location>
</feature>
<protein>
    <recommendedName>
        <fullName evidence="1">Large ribosomal subunit protein uL24</fullName>
    </recommendedName>
    <alternativeName>
        <fullName evidence="2">50S ribosomal protein L24</fullName>
    </alternativeName>
</protein>
<reference key="1">
    <citation type="journal article" date="2005" name="Proc. Natl. Acad. Sci. U.S.A.">
        <title>The psychrophilic lifestyle as revealed by the genome sequence of Colwellia psychrerythraea 34H through genomic and proteomic analyses.</title>
        <authorList>
            <person name="Methe B.A."/>
            <person name="Nelson K.E."/>
            <person name="Deming J.W."/>
            <person name="Momen B."/>
            <person name="Melamud E."/>
            <person name="Zhang X."/>
            <person name="Moult J."/>
            <person name="Madupu R."/>
            <person name="Nelson W.C."/>
            <person name="Dodson R.J."/>
            <person name="Brinkac L.M."/>
            <person name="Daugherty S.C."/>
            <person name="Durkin A.S."/>
            <person name="DeBoy R.T."/>
            <person name="Kolonay J.F."/>
            <person name="Sullivan S.A."/>
            <person name="Zhou L."/>
            <person name="Davidsen T.M."/>
            <person name="Wu M."/>
            <person name="Huston A.L."/>
            <person name="Lewis M."/>
            <person name="Weaver B."/>
            <person name="Weidman J.F."/>
            <person name="Khouri H."/>
            <person name="Utterback T.R."/>
            <person name="Feldblyum T.V."/>
            <person name="Fraser C.M."/>
        </authorList>
    </citation>
    <scope>NUCLEOTIDE SEQUENCE [LARGE SCALE GENOMIC DNA]</scope>
    <source>
        <strain>34H / ATCC BAA-681</strain>
    </source>
</reference>
<dbReference type="EMBL" id="CP000083">
    <property type="protein sequence ID" value="AAZ28576.1"/>
    <property type="molecule type" value="Genomic_DNA"/>
</dbReference>
<dbReference type="RefSeq" id="WP_011041462.1">
    <property type="nucleotide sequence ID" value="NC_003910.7"/>
</dbReference>
<dbReference type="SMR" id="Q489A2"/>
<dbReference type="STRING" id="167879.CPS_0612"/>
<dbReference type="KEGG" id="cps:CPS_0612"/>
<dbReference type="eggNOG" id="COG0198">
    <property type="taxonomic scope" value="Bacteria"/>
</dbReference>
<dbReference type="HOGENOM" id="CLU_093315_2_2_6"/>
<dbReference type="Proteomes" id="UP000000547">
    <property type="component" value="Chromosome"/>
</dbReference>
<dbReference type="GO" id="GO:1990904">
    <property type="term" value="C:ribonucleoprotein complex"/>
    <property type="evidence" value="ECO:0007669"/>
    <property type="project" value="UniProtKB-KW"/>
</dbReference>
<dbReference type="GO" id="GO:0005840">
    <property type="term" value="C:ribosome"/>
    <property type="evidence" value="ECO:0007669"/>
    <property type="project" value="UniProtKB-KW"/>
</dbReference>
<dbReference type="GO" id="GO:0019843">
    <property type="term" value="F:rRNA binding"/>
    <property type="evidence" value="ECO:0007669"/>
    <property type="project" value="UniProtKB-UniRule"/>
</dbReference>
<dbReference type="GO" id="GO:0003735">
    <property type="term" value="F:structural constituent of ribosome"/>
    <property type="evidence" value="ECO:0007669"/>
    <property type="project" value="InterPro"/>
</dbReference>
<dbReference type="GO" id="GO:0006412">
    <property type="term" value="P:translation"/>
    <property type="evidence" value="ECO:0007669"/>
    <property type="project" value="UniProtKB-UniRule"/>
</dbReference>
<dbReference type="CDD" id="cd06089">
    <property type="entry name" value="KOW_RPL26"/>
    <property type="match status" value="1"/>
</dbReference>
<dbReference type="FunFam" id="2.30.30.30:FF:000004">
    <property type="entry name" value="50S ribosomal protein L24"/>
    <property type="match status" value="1"/>
</dbReference>
<dbReference type="Gene3D" id="2.30.30.30">
    <property type="match status" value="1"/>
</dbReference>
<dbReference type="HAMAP" id="MF_01326_B">
    <property type="entry name" value="Ribosomal_uL24_B"/>
    <property type="match status" value="1"/>
</dbReference>
<dbReference type="InterPro" id="IPR005824">
    <property type="entry name" value="KOW"/>
</dbReference>
<dbReference type="InterPro" id="IPR014722">
    <property type="entry name" value="Rib_uL2_dom2"/>
</dbReference>
<dbReference type="InterPro" id="IPR003256">
    <property type="entry name" value="Ribosomal_uL24"/>
</dbReference>
<dbReference type="InterPro" id="IPR005825">
    <property type="entry name" value="Ribosomal_uL24_CS"/>
</dbReference>
<dbReference type="InterPro" id="IPR041988">
    <property type="entry name" value="Ribosomal_uL24_KOW"/>
</dbReference>
<dbReference type="InterPro" id="IPR008991">
    <property type="entry name" value="Translation_prot_SH3-like_sf"/>
</dbReference>
<dbReference type="NCBIfam" id="TIGR01079">
    <property type="entry name" value="rplX_bact"/>
    <property type="match status" value="1"/>
</dbReference>
<dbReference type="PANTHER" id="PTHR12903">
    <property type="entry name" value="MITOCHONDRIAL RIBOSOMAL PROTEIN L24"/>
    <property type="match status" value="1"/>
</dbReference>
<dbReference type="Pfam" id="PF00467">
    <property type="entry name" value="KOW"/>
    <property type="match status" value="1"/>
</dbReference>
<dbReference type="Pfam" id="PF17136">
    <property type="entry name" value="ribosomal_L24"/>
    <property type="match status" value="1"/>
</dbReference>
<dbReference type="SMART" id="SM00739">
    <property type="entry name" value="KOW"/>
    <property type="match status" value="1"/>
</dbReference>
<dbReference type="SUPFAM" id="SSF50104">
    <property type="entry name" value="Translation proteins SH3-like domain"/>
    <property type="match status" value="1"/>
</dbReference>
<dbReference type="PROSITE" id="PS01108">
    <property type="entry name" value="RIBOSOMAL_L24"/>
    <property type="match status" value="1"/>
</dbReference>
<evidence type="ECO:0000255" key="1">
    <source>
        <dbReference type="HAMAP-Rule" id="MF_01326"/>
    </source>
</evidence>
<evidence type="ECO:0000305" key="2"/>